<feature type="chain" id="PRO_1000187856" description="Beta-ketoacyl-[acyl-carrier-protein] synthase III">
    <location>
        <begin position="1"/>
        <end position="326"/>
    </location>
</feature>
<feature type="region of interest" description="ACP-binding" evidence="1">
    <location>
        <begin position="252"/>
        <end position="256"/>
    </location>
</feature>
<feature type="active site" evidence="1">
    <location>
        <position position="112"/>
    </location>
</feature>
<feature type="active site" evidence="1">
    <location>
        <position position="251"/>
    </location>
</feature>
<feature type="active site" evidence="1">
    <location>
        <position position="281"/>
    </location>
</feature>
<keyword id="KW-0012">Acyltransferase</keyword>
<keyword id="KW-0963">Cytoplasm</keyword>
<keyword id="KW-0275">Fatty acid biosynthesis</keyword>
<keyword id="KW-0276">Fatty acid metabolism</keyword>
<keyword id="KW-0444">Lipid biosynthesis</keyword>
<keyword id="KW-0443">Lipid metabolism</keyword>
<keyword id="KW-0511">Multifunctional enzyme</keyword>
<keyword id="KW-0808">Transferase</keyword>
<comment type="function">
    <text evidence="1">Catalyzes the condensation reaction of fatty acid synthesis by the addition to an acyl acceptor of two carbons from malonyl-ACP. Catalyzes the first condensation reaction which initiates fatty acid synthesis and may therefore play a role in governing the total rate of fatty acid production. Possesses both acetoacetyl-ACP synthase and acetyl transacylase activities. Its substrate specificity determines the biosynthesis of branched-chain and/or straight-chain of fatty acids.</text>
</comment>
<comment type="catalytic activity">
    <reaction evidence="1">
        <text>malonyl-[ACP] + acetyl-CoA + H(+) = 3-oxobutanoyl-[ACP] + CO2 + CoA</text>
        <dbReference type="Rhea" id="RHEA:12080"/>
        <dbReference type="Rhea" id="RHEA-COMP:9623"/>
        <dbReference type="Rhea" id="RHEA-COMP:9625"/>
        <dbReference type="ChEBI" id="CHEBI:15378"/>
        <dbReference type="ChEBI" id="CHEBI:16526"/>
        <dbReference type="ChEBI" id="CHEBI:57287"/>
        <dbReference type="ChEBI" id="CHEBI:57288"/>
        <dbReference type="ChEBI" id="CHEBI:78449"/>
        <dbReference type="ChEBI" id="CHEBI:78450"/>
        <dbReference type="EC" id="2.3.1.180"/>
    </reaction>
</comment>
<comment type="pathway">
    <text evidence="1">Lipid metabolism; fatty acid biosynthesis.</text>
</comment>
<comment type="subunit">
    <text evidence="1">Homodimer.</text>
</comment>
<comment type="subcellular location">
    <subcellularLocation>
        <location evidence="1">Cytoplasm</location>
    </subcellularLocation>
</comment>
<comment type="domain">
    <text evidence="1">The last Arg residue of the ACP-binding site is essential for the weak association between ACP/AcpP and FabH.</text>
</comment>
<comment type="similarity">
    <text evidence="1">Belongs to the thiolase-like superfamily. FabH family.</text>
</comment>
<protein>
    <recommendedName>
        <fullName evidence="1">Beta-ketoacyl-[acyl-carrier-protein] synthase III</fullName>
        <shortName evidence="1">Beta-ketoacyl-ACP synthase III</shortName>
        <shortName evidence="1">KAS III</shortName>
        <ecNumber evidence="1">2.3.1.180</ecNumber>
    </recommendedName>
    <alternativeName>
        <fullName evidence="1">3-oxoacyl-[acyl-carrier-protein] synthase 3</fullName>
    </alternativeName>
    <alternativeName>
        <fullName evidence="1">3-oxoacyl-[acyl-carrier-protein] synthase III</fullName>
    </alternativeName>
</protein>
<organism>
    <name type="scientific">Clostridium botulinum (strain Okra / Type B1)</name>
    <dbReference type="NCBI Taxonomy" id="498213"/>
    <lineage>
        <taxon>Bacteria</taxon>
        <taxon>Bacillati</taxon>
        <taxon>Bacillota</taxon>
        <taxon>Clostridia</taxon>
        <taxon>Eubacteriales</taxon>
        <taxon>Clostridiaceae</taxon>
        <taxon>Clostridium</taxon>
    </lineage>
</organism>
<accession>B1IHN1</accession>
<evidence type="ECO:0000255" key="1">
    <source>
        <dbReference type="HAMAP-Rule" id="MF_01815"/>
    </source>
</evidence>
<dbReference type="EC" id="2.3.1.180" evidence="1"/>
<dbReference type="EMBL" id="CP000939">
    <property type="protein sequence ID" value="ACA46500.1"/>
    <property type="molecule type" value="Genomic_DNA"/>
</dbReference>
<dbReference type="RefSeq" id="WP_003401043.1">
    <property type="nucleotide sequence ID" value="NC_010516.1"/>
</dbReference>
<dbReference type="SMR" id="B1IHN1"/>
<dbReference type="KEGG" id="cbb:CLD_0882"/>
<dbReference type="HOGENOM" id="CLU_039592_3_1_9"/>
<dbReference type="UniPathway" id="UPA00094"/>
<dbReference type="Proteomes" id="UP000008541">
    <property type="component" value="Chromosome"/>
</dbReference>
<dbReference type="GO" id="GO:0005737">
    <property type="term" value="C:cytoplasm"/>
    <property type="evidence" value="ECO:0007669"/>
    <property type="project" value="UniProtKB-SubCell"/>
</dbReference>
<dbReference type="GO" id="GO:0004315">
    <property type="term" value="F:3-oxoacyl-[acyl-carrier-protein] synthase activity"/>
    <property type="evidence" value="ECO:0007669"/>
    <property type="project" value="InterPro"/>
</dbReference>
<dbReference type="GO" id="GO:0033818">
    <property type="term" value="F:beta-ketoacyl-acyl-carrier-protein synthase III activity"/>
    <property type="evidence" value="ECO:0007669"/>
    <property type="project" value="UniProtKB-UniRule"/>
</dbReference>
<dbReference type="GO" id="GO:0006633">
    <property type="term" value="P:fatty acid biosynthetic process"/>
    <property type="evidence" value="ECO:0007669"/>
    <property type="project" value="UniProtKB-UniRule"/>
</dbReference>
<dbReference type="GO" id="GO:0044550">
    <property type="term" value="P:secondary metabolite biosynthetic process"/>
    <property type="evidence" value="ECO:0007669"/>
    <property type="project" value="TreeGrafter"/>
</dbReference>
<dbReference type="CDD" id="cd00830">
    <property type="entry name" value="KAS_III"/>
    <property type="match status" value="1"/>
</dbReference>
<dbReference type="FunFam" id="3.40.47.10:FF:000004">
    <property type="entry name" value="3-oxoacyl-[acyl-carrier-protein] synthase 3"/>
    <property type="match status" value="1"/>
</dbReference>
<dbReference type="Gene3D" id="3.40.47.10">
    <property type="match status" value="1"/>
</dbReference>
<dbReference type="HAMAP" id="MF_01815">
    <property type="entry name" value="FabH"/>
    <property type="match status" value="1"/>
</dbReference>
<dbReference type="InterPro" id="IPR013747">
    <property type="entry name" value="ACP_syn_III_C"/>
</dbReference>
<dbReference type="InterPro" id="IPR013751">
    <property type="entry name" value="ACP_syn_III_N"/>
</dbReference>
<dbReference type="InterPro" id="IPR004655">
    <property type="entry name" value="FabH"/>
</dbReference>
<dbReference type="InterPro" id="IPR016039">
    <property type="entry name" value="Thiolase-like"/>
</dbReference>
<dbReference type="NCBIfam" id="TIGR00747">
    <property type="entry name" value="fabH"/>
    <property type="match status" value="1"/>
</dbReference>
<dbReference type="NCBIfam" id="NF006829">
    <property type="entry name" value="PRK09352.1"/>
    <property type="match status" value="1"/>
</dbReference>
<dbReference type="PANTHER" id="PTHR34069">
    <property type="entry name" value="3-OXOACYL-[ACYL-CARRIER-PROTEIN] SYNTHASE 3"/>
    <property type="match status" value="1"/>
</dbReference>
<dbReference type="PANTHER" id="PTHR34069:SF2">
    <property type="entry name" value="BETA-KETOACYL-[ACYL-CARRIER-PROTEIN] SYNTHASE III"/>
    <property type="match status" value="1"/>
</dbReference>
<dbReference type="Pfam" id="PF08545">
    <property type="entry name" value="ACP_syn_III"/>
    <property type="match status" value="1"/>
</dbReference>
<dbReference type="Pfam" id="PF08541">
    <property type="entry name" value="ACP_syn_III_C"/>
    <property type="match status" value="1"/>
</dbReference>
<dbReference type="SUPFAM" id="SSF53901">
    <property type="entry name" value="Thiolase-like"/>
    <property type="match status" value="1"/>
</dbReference>
<reference key="1">
    <citation type="journal article" date="2007" name="PLoS ONE">
        <title>Analysis of the neurotoxin complex genes in Clostridium botulinum A1-A4 and B1 strains: BoNT/A3, /Ba4 and /B1 clusters are located within plasmids.</title>
        <authorList>
            <person name="Smith T.J."/>
            <person name="Hill K.K."/>
            <person name="Foley B.T."/>
            <person name="Detter J.C."/>
            <person name="Munk A.C."/>
            <person name="Bruce D.C."/>
            <person name="Doggett N.A."/>
            <person name="Smith L.A."/>
            <person name="Marks J.D."/>
            <person name="Xie G."/>
            <person name="Brettin T.S."/>
        </authorList>
    </citation>
    <scope>NUCLEOTIDE SEQUENCE [LARGE SCALE GENOMIC DNA]</scope>
    <source>
        <strain>Okra / Type B1</strain>
    </source>
</reference>
<gene>
    <name evidence="1" type="primary">fabH</name>
    <name type="ordered locus">CLD_0882</name>
</gene>
<proteinExistence type="inferred from homology"/>
<sequence>MSNISVIGTGSYVPNNIITNDFLSTIVDTSDEWIRTRTGILERRISKGENTIYMATESAKEAIKNANIEANDLDLIIVATLTPDNFMPSTACSVQKEIGAINALCFDISAACSGFIYGLEIACSMLKNSFRNKALIIGAENLSKIVDWEDRNTCVLFGDGAGAAILSKTKEEGILEFHSRSNGLKGEHLTCGALEANNIFNKDDMLKNNKFIKMNGKEIFRFAVGAMSETIYSIQEKTKWDLSEVKYIISHQANSRIIEYTAKKLNTNKDKFYMNLDKYGNTSAASIPIALDEMNKKGLLNKQDKIILVGFGGGLTFGGVAILWSI</sequence>
<name>FABH_CLOBK</name>